<name>HEMX_PROMI</name>
<feature type="chain" id="PRO_0000135256" description="Protein HemX">
    <location>
        <begin position="1"/>
        <end position="170" status="greater than"/>
    </location>
</feature>
<feature type="transmembrane region" description="Helical" evidence="1">
    <location>
        <begin position="37"/>
        <end position="57"/>
    </location>
</feature>
<feature type="region of interest" description="Disordered" evidence="2">
    <location>
        <begin position="1"/>
        <end position="24"/>
    </location>
</feature>
<feature type="compositionally biased region" description="Polar residues" evidence="2">
    <location>
        <begin position="1"/>
        <end position="17"/>
    </location>
</feature>
<feature type="non-terminal residue">
    <location>
        <position position="170"/>
    </location>
</feature>
<comment type="subcellular location">
    <subcellularLocation>
        <location evidence="3">Cell membrane</location>
        <topology evidence="1">Single-pass membrane protein</topology>
    </subcellularLocation>
</comment>
<sequence length="170" mass="18243">MTEQKNTNENDLQNGTSKADDDIRYQEVKPVNNKRSGLIGSAVAILVILAIGGGLYYYTTQQATKLRDPDHLLSDNENPGITCALIPTDVKGVEIGHRHFPLNVPFMNGPTRGKDVFVPIDFIIGGPKMAGQGWRMLVECLSVGRGITLPSNSTGGLKSAAMATGATLEF</sequence>
<dbReference type="EMBL" id="U22969">
    <property type="protein sequence ID" value="AAC44327.1"/>
    <property type="molecule type" value="Genomic_DNA"/>
</dbReference>
<dbReference type="STRING" id="584.AOUC001_14115"/>
<dbReference type="GO" id="GO:0005886">
    <property type="term" value="C:plasma membrane"/>
    <property type="evidence" value="ECO:0007669"/>
    <property type="project" value="UniProtKB-SubCell"/>
</dbReference>
<dbReference type="GO" id="GO:0016627">
    <property type="term" value="F:oxidoreductase activity, acting on the CH-CH group of donors"/>
    <property type="evidence" value="ECO:0007669"/>
    <property type="project" value="InterPro"/>
</dbReference>
<dbReference type="Gene3D" id="2.40.110.10">
    <property type="entry name" value="Butyryl-CoA Dehydrogenase, subunit A, domain 2"/>
    <property type="match status" value="1"/>
</dbReference>
<dbReference type="Gene3D" id="1.20.140.10">
    <property type="entry name" value="Butyryl-CoA Dehydrogenase, subunit A, domain 3"/>
    <property type="match status" value="1"/>
</dbReference>
<dbReference type="InterPro" id="IPR046373">
    <property type="entry name" value="Acyl-CoA_Oxase/DH_mid-dom_sf"/>
</dbReference>
<dbReference type="InterPro" id="IPR009100">
    <property type="entry name" value="AcylCoA_DH/oxidase_NM_dom_sf"/>
</dbReference>
<dbReference type="SUPFAM" id="SSF56645">
    <property type="entry name" value="Acyl-CoA dehydrogenase NM domain-like"/>
    <property type="match status" value="1"/>
</dbReference>
<accession>Q51887</accession>
<reference key="1">
    <citation type="journal article" date="1996" name="Biochimie">
        <title>Comparative analysis of the cya locus in enterobacteria and related Gram-negative facultative anaerobes.</title>
        <authorList>
            <person name="Trotot P."/>
            <person name="Sismeiro O."/>
            <person name="Vivares C."/>
            <person name="Glaser P."/>
            <person name="Bresson-Roy A."/>
            <person name="Danchin A."/>
        </authorList>
    </citation>
    <scope>NUCLEOTIDE SEQUENCE [GENOMIC DNA]</scope>
</reference>
<keyword id="KW-1003">Cell membrane</keyword>
<keyword id="KW-0472">Membrane</keyword>
<keyword id="KW-0812">Transmembrane</keyword>
<keyword id="KW-1133">Transmembrane helix</keyword>
<evidence type="ECO:0000255" key="1"/>
<evidence type="ECO:0000256" key="2">
    <source>
        <dbReference type="SAM" id="MobiDB-lite"/>
    </source>
</evidence>
<evidence type="ECO:0000305" key="3"/>
<evidence type="ECO:0000312" key="4">
    <source>
        <dbReference type="EMBL" id="AAC44327.1"/>
    </source>
</evidence>
<protein>
    <recommendedName>
        <fullName evidence="3">Protein HemX</fullName>
    </recommendedName>
</protein>
<gene>
    <name evidence="4" type="primary">hemX</name>
</gene>
<proteinExistence type="inferred from homology"/>
<organism>
    <name type="scientific">Proteus mirabilis</name>
    <dbReference type="NCBI Taxonomy" id="584"/>
    <lineage>
        <taxon>Bacteria</taxon>
        <taxon>Pseudomonadati</taxon>
        <taxon>Pseudomonadota</taxon>
        <taxon>Gammaproteobacteria</taxon>
        <taxon>Enterobacterales</taxon>
        <taxon>Morganellaceae</taxon>
        <taxon>Proteus</taxon>
    </lineage>
</organism>